<feature type="signal peptide" evidence="1">
    <location>
        <begin position="1"/>
        <end position="38"/>
    </location>
</feature>
<feature type="chain" id="PRO_0000359527" description="Serine protease SplA">
    <location>
        <begin position="39"/>
        <end position="238"/>
    </location>
</feature>
<feature type="active site" description="Charge relay system" evidence="1">
    <location>
        <position position="77"/>
    </location>
</feature>
<feature type="active site" description="Charge relay system" evidence="1">
    <location>
        <position position="116"/>
    </location>
</feature>
<feature type="active site" description="Charge relay system" evidence="1">
    <location>
        <position position="192"/>
    </location>
</feature>
<evidence type="ECO:0000250" key="1"/>
<evidence type="ECO:0000269" key="2">
    <source>
    </source>
</evidence>
<evidence type="ECO:0000305" key="3"/>
<sequence>MNKNVMVKGLTALTILTILTSLGFAENISNQPHSIAKAEKNVKEITDATKEPYNSVVAFVGGTGVVVGKNTIVTNKHIAKSNDIFKNRVSAHHSSKGKGGGNYDVKDIVEYPGKEDLAIVHVHETSTEGLNFNKNVSYTKFADGAKVKDRISVIGYPKGAQTKYKMFESTGTINHISGTFMEFDAYAQPGNSGSPVLNSKHELIGILYAGSGKDESEKNFGVYFTPQLKEFIQNNIEK</sequence>
<organism>
    <name type="scientific">Staphylococcus aureus (strain COL)</name>
    <dbReference type="NCBI Taxonomy" id="93062"/>
    <lineage>
        <taxon>Bacteria</taxon>
        <taxon>Bacillati</taxon>
        <taxon>Bacillota</taxon>
        <taxon>Bacilli</taxon>
        <taxon>Bacillales</taxon>
        <taxon>Staphylococcaceae</taxon>
        <taxon>Staphylococcus</taxon>
    </lineage>
</organism>
<proteinExistence type="evidence at protein level"/>
<keyword id="KW-0378">Hydrolase</keyword>
<keyword id="KW-0645">Protease</keyword>
<keyword id="KW-0964">Secreted</keyword>
<keyword id="KW-0720">Serine protease</keyword>
<keyword id="KW-0732">Signal</keyword>
<comment type="subcellular location">
    <subcellularLocation>
        <location evidence="1">Secreted</location>
    </subcellularLocation>
</comment>
<comment type="induction">
    <text evidence="2">Negatively regulated by sigma-B factor.</text>
</comment>
<comment type="similarity">
    <text evidence="3">Belongs to the peptidase S1B family.</text>
</comment>
<gene>
    <name type="primary">splA</name>
    <name type="ordered locus">SACOL1869</name>
</gene>
<dbReference type="EC" id="3.4.21.-"/>
<dbReference type="EMBL" id="CP000046">
    <property type="protein sequence ID" value="AAW36884.1"/>
    <property type="molecule type" value="Genomic_DNA"/>
</dbReference>
<dbReference type="RefSeq" id="WP_001039423.1">
    <property type="nucleotide sequence ID" value="NZ_JBGOFO010000015.1"/>
</dbReference>
<dbReference type="SMR" id="Q5HEW0"/>
<dbReference type="MEROPS" id="S01.503"/>
<dbReference type="KEGG" id="sac:SACOL1869"/>
<dbReference type="HOGENOM" id="CLU_073589_2_0_9"/>
<dbReference type="Proteomes" id="UP000000530">
    <property type="component" value="Chromosome"/>
</dbReference>
<dbReference type="GO" id="GO:0005576">
    <property type="term" value="C:extracellular region"/>
    <property type="evidence" value="ECO:0007669"/>
    <property type="project" value="UniProtKB-SubCell"/>
</dbReference>
<dbReference type="GO" id="GO:0004252">
    <property type="term" value="F:serine-type endopeptidase activity"/>
    <property type="evidence" value="ECO:0007669"/>
    <property type="project" value="InterPro"/>
</dbReference>
<dbReference type="GO" id="GO:0006508">
    <property type="term" value="P:proteolysis"/>
    <property type="evidence" value="ECO:0007669"/>
    <property type="project" value="UniProtKB-KW"/>
</dbReference>
<dbReference type="Gene3D" id="2.40.10.10">
    <property type="entry name" value="Trypsin-like serine proteases"/>
    <property type="match status" value="2"/>
</dbReference>
<dbReference type="InterPro" id="IPR009003">
    <property type="entry name" value="Peptidase_S1_PA"/>
</dbReference>
<dbReference type="InterPro" id="IPR043504">
    <property type="entry name" value="Peptidase_S1_PA_chymotrypsin"/>
</dbReference>
<dbReference type="InterPro" id="IPR008256">
    <property type="entry name" value="Peptidase_S1B"/>
</dbReference>
<dbReference type="InterPro" id="IPR008353">
    <property type="entry name" value="Peptidase_S1B_tx"/>
</dbReference>
<dbReference type="InterPro" id="IPR001254">
    <property type="entry name" value="Trypsin_dom"/>
</dbReference>
<dbReference type="InterPro" id="IPR028301">
    <property type="entry name" value="V8_his_AS"/>
</dbReference>
<dbReference type="PANTHER" id="PTHR43019:SF23">
    <property type="entry name" value="PROTEASE DO-LIKE 5, CHLOROPLASTIC"/>
    <property type="match status" value="1"/>
</dbReference>
<dbReference type="PANTHER" id="PTHR43019">
    <property type="entry name" value="SERINE ENDOPROTEASE DEGS"/>
    <property type="match status" value="1"/>
</dbReference>
<dbReference type="Pfam" id="PF00089">
    <property type="entry name" value="Trypsin"/>
    <property type="match status" value="1"/>
</dbReference>
<dbReference type="PRINTS" id="PR01774">
    <property type="entry name" value="EXFOLTOXIN"/>
</dbReference>
<dbReference type="PRINTS" id="PR00839">
    <property type="entry name" value="V8PROTEASE"/>
</dbReference>
<dbReference type="SUPFAM" id="SSF50494">
    <property type="entry name" value="Trypsin-like serine proteases"/>
    <property type="match status" value="1"/>
</dbReference>
<dbReference type="PROSITE" id="PS00672">
    <property type="entry name" value="V8_HIS"/>
    <property type="match status" value="1"/>
</dbReference>
<reference key="1">
    <citation type="journal article" date="2005" name="J. Bacteriol.">
        <title>Insights on evolution of virulence and resistance from the complete genome analysis of an early methicillin-resistant Staphylococcus aureus strain and a biofilm-producing methicillin-resistant Staphylococcus epidermidis strain.</title>
        <authorList>
            <person name="Gill S.R."/>
            <person name="Fouts D.E."/>
            <person name="Archer G.L."/>
            <person name="Mongodin E.F."/>
            <person name="DeBoy R.T."/>
            <person name="Ravel J."/>
            <person name="Paulsen I.T."/>
            <person name="Kolonay J.F."/>
            <person name="Brinkac L.M."/>
            <person name="Beanan M.J."/>
            <person name="Dodson R.J."/>
            <person name="Daugherty S.C."/>
            <person name="Madupu R."/>
            <person name="Angiuoli S.V."/>
            <person name="Durkin A.S."/>
            <person name="Haft D.H."/>
            <person name="Vamathevan J.J."/>
            <person name="Khouri H."/>
            <person name="Utterback T.R."/>
            <person name="Lee C."/>
            <person name="Dimitrov G."/>
            <person name="Jiang L."/>
            <person name="Qin H."/>
            <person name="Weidman J."/>
            <person name="Tran K."/>
            <person name="Kang K.H."/>
            <person name="Hance I.R."/>
            <person name="Nelson K.E."/>
            <person name="Fraser C.M."/>
        </authorList>
    </citation>
    <scope>NUCLEOTIDE SEQUENCE [LARGE SCALE GENOMIC DNA]</scope>
    <source>
        <strain>COL</strain>
    </source>
</reference>
<reference key="2">
    <citation type="journal article" date="2001" name="Proteomics">
        <title>Extracellular proteins of Staphylococcus aureus and the role of SarA and sigma B.</title>
        <authorList>
            <person name="Ziebandt A.-K."/>
            <person name="Weber H."/>
            <person name="Rudolph J."/>
            <person name="Schmid R."/>
            <person name="Hoeper D."/>
            <person name="Engelmann S."/>
            <person name="Hecker M."/>
        </authorList>
    </citation>
    <scope>IDENTIFICATION BY MASS SPECTROMETRY</scope>
    <scope>INDUCTION</scope>
</reference>
<name>SPLA_STAAC</name>
<accession>Q5HEW0</accession>
<protein>
    <recommendedName>
        <fullName>Serine protease SplA</fullName>
        <ecNumber>3.4.21.-</ecNumber>
    </recommendedName>
</protein>